<comment type="function">
    <text evidence="1">O-methyltransferase that catalyzes the 2 O-methylation steps in the ubiquinone biosynthetic pathway.</text>
</comment>
<comment type="catalytic activity">
    <reaction evidence="1">
        <text>a 3-demethylubiquinol + S-adenosyl-L-methionine = a ubiquinol + S-adenosyl-L-homocysteine + H(+)</text>
        <dbReference type="Rhea" id="RHEA:44380"/>
        <dbReference type="Rhea" id="RHEA-COMP:9566"/>
        <dbReference type="Rhea" id="RHEA-COMP:10914"/>
        <dbReference type="ChEBI" id="CHEBI:15378"/>
        <dbReference type="ChEBI" id="CHEBI:17976"/>
        <dbReference type="ChEBI" id="CHEBI:57856"/>
        <dbReference type="ChEBI" id="CHEBI:59789"/>
        <dbReference type="ChEBI" id="CHEBI:84422"/>
        <dbReference type="EC" id="2.1.1.64"/>
    </reaction>
</comment>
<comment type="catalytic activity">
    <reaction evidence="1">
        <text>a 3-(all-trans-polyprenyl)benzene-1,2-diol + S-adenosyl-L-methionine = a 2-methoxy-6-(all-trans-polyprenyl)phenol + S-adenosyl-L-homocysteine + H(+)</text>
        <dbReference type="Rhea" id="RHEA:31411"/>
        <dbReference type="Rhea" id="RHEA-COMP:9550"/>
        <dbReference type="Rhea" id="RHEA-COMP:9551"/>
        <dbReference type="ChEBI" id="CHEBI:15378"/>
        <dbReference type="ChEBI" id="CHEBI:57856"/>
        <dbReference type="ChEBI" id="CHEBI:59789"/>
        <dbReference type="ChEBI" id="CHEBI:62729"/>
        <dbReference type="ChEBI" id="CHEBI:62731"/>
        <dbReference type="EC" id="2.1.1.222"/>
    </reaction>
</comment>
<comment type="pathway">
    <text evidence="1">Cofactor biosynthesis; ubiquinone biosynthesis.</text>
</comment>
<comment type="similarity">
    <text evidence="1">Belongs to the methyltransferase superfamily. UbiG/COQ3 family.</text>
</comment>
<dbReference type="EC" id="2.1.1.222" evidence="1"/>
<dbReference type="EC" id="2.1.1.64" evidence="1"/>
<dbReference type="EMBL" id="CP000026">
    <property type="protein sequence ID" value="AAV76590.1"/>
    <property type="molecule type" value="Genomic_DNA"/>
</dbReference>
<dbReference type="RefSeq" id="WP_001091010.1">
    <property type="nucleotide sequence ID" value="NC_006511.1"/>
</dbReference>
<dbReference type="SMR" id="Q5PCY1"/>
<dbReference type="KEGG" id="spt:SPA0588"/>
<dbReference type="HOGENOM" id="CLU_042432_5_0_6"/>
<dbReference type="UniPathway" id="UPA00232"/>
<dbReference type="Proteomes" id="UP000008185">
    <property type="component" value="Chromosome"/>
</dbReference>
<dbReference type="GO" id="GO:0102208">
    <property type="term" value="F:2-polyprenyl-6-hydroxyphenol methylase activity"/>
    <property type="evidence" value="ECO:0007669"/>
    <property type="project" value="UniProtKB-EC"/>
</dbReference>
<dbReference type="GO" id="GO:0061542">
    <property type="term" value="F:3-demethylubiquinol 3-O-methyltransferase activity"/>
    <property type="evidence" value="ECO:0007669"/>
    <property type="project" value="UniProtKB-UniRule"/>
</dbReference>
<dbReference type="GO" id="GO:0010420">
    <property type="term" value="F:polyprenyldihydroxybenzoate methyltransferase activity"/>
    <property type="evidence" value="ECO:0007669"/>
    <property type="project" value="InterPro"/>
</dbReference>
<dbReference type="GO" id="GO:0032259">
    <property type="term" value="P:methylation"/>
    <property type="evidence" value="ECO:0007669"/>
    <property type="project" value="UniProtKB-KW"/>
</dbReference>
<dbReference type="CDD" id="cd02440">
    <property type="entry name" value="AdoMet_MTases"/>
    <property type="match status" value="1"/>
</dbReference>
<dbReference type="FunFam" id="3.40.50.150:FF:000028">
    <property type="entry name" value="Ubiquinone biosynthesis O-methyltransferase"/>
    <property type="match status" value="1"/>
</dbReference>
<dbReference type="Gene3D" id="3.40.50.150">
    <property type="entry name" value="Vaccinia Virus protein VP39"/>
    <property type="match status" value="1"/>
</dbReference>
<dbReference type="HAMAP" id="MF_00472">
    <property type="entry name" value="UbiG"/>
    <property type="match status" value="1"/>
</dbReference>
<dbReference type="InterPro" id="IPR029063">
    <property type="entry name" value="SAM-dependent_MTases_sf"/>
</dbReference>
<dbReference type="InterPro" id="IPR010233">
    <property type="entry name" value="UbiG_MeTrfase"/>
</dbReference>
<dbReference type="NCBIfam" id="TIGR01983">
    <property type="entry name" value="UbiG"/>
    <property type="match status" value="1"/>
</dbReference>
<dbReference type="PANTHER" id="PTHR43464">
    <property type="entry name" value="METHYLTRANSFERASE"/>
    <property type="match status" value="1"/>
</dbReference>
<dbReference type="PANTHER" id="PTHR43464:SF19">
    <property type="entry name" value="UBIQUINONE BIOSYNTHESIS O-METHYLTRANSFERASE, MITOCHONDRIAL"/>
    <property type="match status" value="1"/>
</dbReference>
<dbReference type="Pfam" id="PF13489">
    <property type="entry name" value="Methyltransf_23"/>
    <property type="match status" value="1"/>
</dbReference>
<dbReference type="SUPFAM" id="SSF53335">
    <property type="entry name" value="S-adenosyl-L-methionine-dependent methyltransferases"/>
    <property type="match status" value="1"/>
</dbReference>
<accession>Q5PCY1</accession>
<name>UBIG_SALPA</name>
<protein>
    <recommendedName>
        <fullName evidence="1">Ubiquinone biosynthesis O-methyltransferase</fullName>
    </recommendedName>
    <alternativeName>
        <fullName evidence="1">2-polyprenyl-6-hydroxyphenol methylase</fullName>
        <ecNumber evidence="1">2.1.1.222</ecNumber>
    </alternativeName>
    <alternativeName>
        <fullName evidence="1">3-demethylubiquinone 3-O-methyltransferase</fullName>
        <ecNumber evidence="1">2.1.1.64</ecNumber>
    </alternativeName>
</protein>
<gene>
    <name evidence="1" type="primary">ubiG</name>
    <name type="ordered locus">SPA0588</name>
</gene>
<keyword id="KW-0489">Methyltransferase</keyword>
<keyword id="KW-0949">S-adenosyl-L-methionine</keyword>
<keyword id="KW-0808">Transferase</keyword>
<keyword id="KW-0831">Ubiquinone biosynthesis</keyword>
<feature type="chain" id="PRO_0000241735" description="Ubiquinone biosynthesis O-methyltransferase">
    <location>
        <begin position="1"/>
        <end position="242"/>
    </location>
</feature>
<feature type="binding site" evidence="1">
    <location>
        <position position="44"/>
    </location>
    <ligand>
        <name>S-adenosyl-L-methionine</name>
        <dbReference type="ChEBI" id="CHEBI:59789"/>
    </ligand>
</feature>
<feature type="binding site" evidence="1">
    <location>
        <position position="64"/>
    </location>
    <ligand>
        <name>S-adenosyl-L-methionine</name>
        <dbReference type="ChEBI" id="CHEBI:59789"/>
    </ligand>
</feature>
<feature type="binding site" evidence="1">
    <location>
        <position position="85"/>
    </location>
    <ligand>
        <name>S-adenosyl-L-methionine</name>
        <dbReference type="ChEBI" id="CHEBI:59789"/>
    </ligand>
</feature>
<feature type="binding site" evidence="1">
    <location>
        <position position="129"/>
    </location>
    <ligand>
        <name>S-adenosyl-L-methionine</name>
        <dbReference type="ChEBI" id="CHEBI:59789"/>
    </ligand>
</feature>
<organism>
    <name type="scientific">Salmonella paratyphi A (strain ATCC 9150 / SARB42)</name>
    <dbReference type="NCBI Taxonomy" id="295319"/>
    <lineage>
        <taxon>Bacteria</taxon>
        <taxon>Pseudomonadati</taxon>
        <taxon>Pseudomonadota</taxon>
        <taxon>Gammaproteobacteria</taxon>
        <taxon>Enterobacterales</taxon>
        <taxon>Enterobacteriaceae</taxon>
        <taxon>Salmonella</taxon>
    </lineage>
</organism>
<proteinExistence type="inferred from homology"/>
<reference key="1">
    <citation type="journal article" date="2004" name="Nat. Genet.">
        <title>Comparison of genome degradation in Paratyphi A and Typhi, human-restricted serovars of Salmonella enterica that cause typhoid.</title>
        <authorList>
            <person name="McClelland M."/>
            <person name="Sanderson K.E."/>
            <person name="Clifton S.W."/>
            <person name="Latreille P."/>
            <person name="Porwollik S."/>
            <person name="Sabo A."/>
            <person name="Meyer R."/>
            <person name="Bieri T."/>
            <person name="Ozersky P."/>
            <person name="McLellan M."/>
            <person name="Harkins C.R."/>
            <person name="Wang C."/>
            <person name="Nguyen C."/>
            <person name="Berghoff A."/>
            <person name="Elliott G."/>
            <person name="Kohlberg S."/>
            <person name="Strong C."/>
            <person name="Du F."/>
            <person name="Carter J."/>
            <person name="Kremizki C."/>
            <person name="Layman D."/>
            <person name="Leonard S."/>
            <person name="Sun H."/>
            <person name="Fulton L."/>
            <person name="Nash W."/>
            <person name="Miner T."/>
            <person name="Minx P."/>
            <person name="Delehaunty K."/>
            <person name="Fronick C."/>
            <person name="Magrini V."/>
            <person name="Nhan M."/>
            <person name="Warren W."/>
            <person name="Florea L."/>
            <person name="Spieth J."/>
            <person name="Wilson R.K."/>
        </authorList>
    </citation>
    <scope>NUCLEOTIDE SEQUENCE [LARGE SCALE GENOMIC DNA]</scope>
    <source>
        <strain>ATCC 9150 / SARB42</strain>
    </source>
</reference>
<evidence type="ECO:0000255" key="1">
    <source>
        <dbReference type="HAMAP-Rule" id="MF_00472"/>
    </source>
</evidence>
<sequence>MNTEKPSVAHNVDHNEIAKFEAVASRWWDLEGEFKPLHRINPLRLGYITERSGGLFGKKVLDVGCGGGILAESMAREGATVTGLDMGFEPLQVAKLRALESGIEVEYVQETVEEHAAKHAQQYDVVTCMEMLEHVPDPQSVVHACAQLVKPDGEVFFSTLNRNGKSWLMAVVGAEYILRMVPKGTHDVKKFIKPAELLSWVDETVLKEQHITGLHYNPITNTFKLGPGVDVNYMLHTRAKKA</sequence>